<feature type="chain" id="PRO_0000059547" description="Xylulose kinase">
    <location>
        <begin position="1"/>
        <end position="96" status="greater than"/>
    </location>
</feature>
<feature type="binding site" evidence="1">
    <location>
        <begin position="71"/>
        <end position="72"/>
    </location>
    <ligand>
        <name>substrate</name>
    </ligand>
</feature>
<feature type="site" description="Important for activity" evidence="1">
    <location>
        <position position="8"/>
    </location>
</feature>
<feature type="non-terminal residue">
    <location>
        <position position="96"/>
    </location>
</feature>
<name>XYLB_ARTS7</name>
<dbReference type="EC" id="2.7.1.17" evidence="1"/>
<dbReference type="EMBL" id="X59466">
    <property type="protein sequence ID" value="CAA42074.1"/>
    <property type="molecule type" value="Genomic_DNA"/>
</dbReference>
<dbReference type="SMR" id="P26909"/>
<dbReference type="GO" id="GO:0005524">
    <property type="term" value="F:ATP binding"/>
    <property type="evidence" value="ECO:0007669"/>
    <property type="project" value="UniProtKB-KW"/>
</dbReference>
<dbReference type="GO" id="GO:0004856">
    <property type="term" value="F:D-xylulokinase activity"/>
    <property type="evidence" value="ECO:0007669"/>
    <property type="project" value="UniProtKB-EC"/>
</dbReference>
<dbReference type="GO" id="GO:0042732">
    <property type="term" value="P:D-xylose metabolic process"/>
    <property type="evidence" value="ECO:0007669"/>
    <property type="project" value="UniProtKB-KW"/>
</dbReference>
<dbReference type="Gene3D" id="3.30.420.40">
    <property type="match status" value="1"/>
</dbReference>
<dbReference type="InterPro" id="IPR043129">
    <property type="entry name" value="ATPase_NBD"/>
</dbReference>
<dbReference type="InterPro" id="IPR050406">
    <property type="entry name" value="FGGY_Carb_Kinase"/>
</dbReference>
<dbReference type="InterPro" id="IPR018484">
    <property type="entry name" value="FGGY_N"/>
</dbReference>
<dbReference type="PANTHER" id="PTHR43095">
    <property type="entry name" value="SUGAR KINASE"/>
    <property type="match status" value="1"/>
</dbReference>
<dbReference type="PANTHER" id="PTHR43095:SF5">
    <property type="entry name" value="XYLULOSE KINASE"/>
    <property type="match status" value="1"/>
</dbReference>
<dbReference type="Pfam" id="PF00370">
    <property type="entry name" value="FGGY_N"/>
    <property type="match status" value="1"/>
</dbReference>
<dbReference type="SUPFAM" id="SSF53067">
    <property type="entry name" value="Actin-like ATPase domain"/>
    <property type="match status" value="1"/>
</dbReference>
<organism>
    <name type="scientific">Arthrobacter sp. (strain NRRL B3728)</name>
    <dbReference type="NCBI Taxonomy" id="1669"/>
    <lineage>
        <taxon>Bacteria</taxon>
        <taxon>Bacillati</taxon>
        <taxon>Actinomycetota</taxon>
        <taxon>Actinomycetes</taxon>
        <taxon>Micrococcales</taxon>
        <taxon>Micrococcaceae</taxon>
        <taxon>Arthrobacter</taxon>
    </lineage>
</organism>
<evidence type="ECO:0000255" key="1">
    <source>
        <dbReference type="HAMAP-Rule" id="MF_02220"/>
    </source>
</evidence>
<evidence type="ECO:0000305" key="2"/>
<sequence>MTLVAGIDSSTQSCKVVIRDADTGVLIRSSRASHPDGTEVDPEFWFDALQEAIAQAGGLDDVAAISVGGQQHGMVALDATGAVIRPALLWNDNRSA</sequence>
<reference key="1">
    <citation type="journal article" date="1991" name="Biochem. J.">
        <title>D-xylose (D-glucose) isomerase from Arthrobacter strain N.R.R.L. B3728. Gene cloning, sequence and expression.</title>
        <authorList>
            <person name="Loviny-Anderton T."/>
            <person name="Shaw P.C."/>
            <person name="Shin M.K."/>
            <person name="Hartley B.S."/>
        </authorList>
    </citation>
    <scope>NUCLEOTIDE SEQUENCE [GENOMIC DNA]</scope>
</reference>
<accession>P26909</accession>
<keyword id="KW-0067">ATP-binding</keyword>
<keyword id="KW-0119">Carbohydrate metabolism</keyword>
<keyword id="KW-0418">Kinase</keyword>
<keyword id="KW-0547">Nucleotide-binding</keyword>
<keyword id="KW-0808">Transferase</keyword>
<keyword id="KW-0859">Xylose metabolism</keyword>
<gene>
    <name evidence="1" type="primary">xylB</name>
</gene>
<protein>
    <recommendedName>
        <fullName evidence="1">Xylulose kinase</fullName>
        <shortName evidence="1">Xylulokinase</shortName>
        <ecNumber evidence="1">2.7.1.17</ecNumber>
    </recommendedName>
</protein>
<proteinExistence type="inferred from homology"/>
<comment type="function">
    <text evidence="1">Catalyzes the phosphorylation of D-xylulose to D-xylulose 5-phosphate.</text>
</comment>
<comment type="catalytic activity">
    <reaction evidence="1">
        <text>D-xylulose + ATP = D-xylulose 5-phosphate + ADP + H(+)</text>
        <dbReference type="Rhea" id="RHEA:10964"/>
        <dbReference type="ChEBI" id="CHEBI:15378"/>
        <dbReference type="ChEBI" id="CHEBI:17140"/>
        <dbReference type="ChEBI" id="CHEBI:30616"/>
        <dbReference type="ChEBI" id="CHEBI:57737"/>
        <dbReference type="ChEBI" id="CHEBI:456216"/>
        <dbReference type="EC" id="2.7.1.17"/>
    </reaction>
</comment>
<comment type="similarity">
    <text evidence="1 2">Belongs to the FGGY kinase family.</text>
</comment>